<gene>
    <name evidence="8" type="primary">hag</name>
    <name type="ordered locus">BSU35360</name>
</gene>
<evidence type="ECO:0000269" key="1">
    <source>
    </source>
</evidence>
<evidence type="ECO:0000269" key="2">
    <source>
    </source>
</evidence>
<evidence type="ECO:0000269" key="3">
    <source>
    </source>
</evidence>
<evidence type="ECO:0000269" key="4">
    <source>
    </source>
</evidence>
<evidence type="ECO:0000269" key="5">
    <source>
    </source>
</evidence>
<evidence type="ECO:0000269" key="6">
    <source>
    </source>
</evidence>
<evidence type="ECO:0000269" key="7">
    <source>
    </source>
</evidence>
<evidence type="ECO:0000303" key="8">
    <source>
    </source>
</evidence>
<evidence type="ECO:0000303" key="9">
    <source>
    </source>
</evidence>
<evidence type="ECO:0000305" key="10"/>
<evidence type="ECO:0007829" key="11">
    <source>
        <dbReference type="PDB" id="5MAW"/>
    </source>
</evidence>
<evidence type="ECO:0007829" key="12">
    <source>
        <dbReference type="PDB" id="6GOW"/>
    </source>
</evidence>
<name>FLA_BACSU</name>
<reference key="1">
    <citation type="journal article" date="1976" name="J. Biol. Chem.">
        <title>Amino acid sequence of flagellin of Bacillus subtilis 168. III. Tryptic peptides, N-bromosuccinimide peptides, and the complete amino acid sequence.</title>
        <authorList>
            <person name="Delange R.J."/>
            <person name="Chang J.Y."/>
            <person name="Shaper J.H."/>
            <person name="Glazer A.N."/>
        </authorList>
    </citation>
    <scope>PROTEIN SEQUENCE</scope>
    <source>
        <strain>168</strain>
    </source>
</reference>
<reference key="2">
    <citation type="journal article" date="1989" name="J. Bacteriol.">
        <title>Cloning of the flagellin gene from Bacillus subtilis and complementation studies of an in vitro-derived deletion mutation.</title>
        <authorList>
            <person name="Lavallie E.R."/>
            <person name="Stahl M.L."/>
        </authorList>
    </citation>
    <scope>NUCLEOTIDE SEQUENCE [GENOMIC DNA]</scope>
</reference>
<reference key="3">
    <citation type="journal article" date="1989" name="J. Bacteriol.">
        <title>The Bacillus subtilis flagellin gene (hag) is transcribed by the sigma 28 form of RNA polymerase.</title>
        <authorList>
            <person name="Mirel D.B."/>
            <person name="Chamberlin M.J."/>
        </authorList>
    </citation>
    <scope>NUCLEOTIDE SEQUENCE [GENOMIC DNA]</scope>
</reference>
<reference key="4">
    <citation type="journal article" date="1996" name="Microbiology">
        <title>Sequence of the 305 degrees-307 degrees region of the Bacillus subtilis chromosome.</title>
        <authorList>
            <person name="Soldo B."/>
            <person name="Lazarevic V."/>
            <person name="Mauel C."/>
            <person name="Karamata D."/>
        </authorList>
    </citation>
    <scope>NUCLEOTIDE SEQUENCE [GENOMIC DNA]</scope>
    <source>
        <strain>168</strain>
    </source>
</reference>
<reference key="5">
    <citation type="journal article" date="1997" name="Nature">
        <title>The complete genome sequence of the Gram-positive bacterium Bacillus subtilis.</title>
        <authorList>
            <person name="Kunst F."/>
            <person name="Ogasawara N."/>
            <person name="Moszer I."/>
            <person name="Albertini A.M."/>
            <person name="Alloni G."/>
            <person name="Azevedo V."/>
            <person name="Bertero M.G."/>
            <person name="Bessieres P."/>
            <person name="Bolotin A."/>
            <person name="Borchert S."/>
            <person name="Borriss R."/>
            <person name="Boursier L."/>
            <person name="Brans A."/>
            <person name="Braun M."/>
            <person name="Brignell S.C."/>
            <person name="Bron S."/>
            <person name="Brouillet S."/>
            <person name="Bruschi C.V."/>
            <person name="Caldwell B."/>
            <person name="Capuano V."/>
            <person name="Carter N.M."/>
            <person name="Choi S.-K."/>
            <person name="Codani J.-J."/>
            <person name="Connerton I.F."/>
            <person name="Cummings N.J."/>
            <person name="Daniel R.A."/>
            <person name="Denizot F."/>
            <person name="Devine K.M."/>
            <person name="Duesterhoeft A."/>
            <person name="Ehrlich S.D."/>
            <person name="Emmerson P.T."/>
            <person name="Entian K.-D."/>
            <person name="Errington J."/>
            <person name="Fabret C."/>
            <person name="Ferrari E."/>
            <person name="Foulger D."/>
            <person name="Fritz C."/>
            <person name="Fujita M."/>
            <person name="Fujita Y."/>
            <person name="Fuma S."/>
            <person name="Galizzi A."/>
            <person name="Galleron N."/>
            <person name="Ghim S.-Y."/>
            <person name="Glaser P."/>
            <person name="Goffeau A."/>
            <person name="Golightly E.J."/>
            <person name="Grandi G."/>
            <person name="Guiseppi G."/>
            <person name="Guy B.J."/>
            <person name="Haga K."/>
            <person name="Haiech J."/>
            <person name="Harwood C.R."/>
            <person name="Henaut A."/>
            <person name="Hilbert H."/>
            <person name="Holsappel S."/>
            <person name="Hosono S."/>
            <person name="Hullo M.-F."/>
            <person name="Itaya M."/>
            <person name="Jones L.-M."/>
            <person name="Joris B."/>
            <person name="Karamata D."/>
            <person name="Kasahara Y."/>
            <person name="Klaerr-Blanchard M."/>
            <person name="Klein C."/>
            <person name="Kobayashi Y."/>
            <person name="Koetter P."/>
            <person name="Koningstein G."/>
            <person name="Krogh S."/>
            <person name="Kumano M."/>
            <person name="Kurita K."/>
            <person name="Lapidus A."/>
            <person name="Lardinois S."/>
            <person name="Lauber J."/>
            <person name="Lazarevic V."/>
            <person name="Lee S.-M."/>
            <person name="Levine A."/>
            <person name="Liu H."/>
            <person name="Masuda S."/>
            <person name="Mauel C."/>
            <person name="Medigue C."/>
            <person name="Medina N."/>
            <person name="Mellado R.P."/>
            <person name="Mizuno M."/>
            <person name="Moestl D."/>
            <person name="Nakai S."/>
            <person name="Noback M."/>
            <person name="Noone D."/>
            <person name="O'Reilly M."/>
            <person name="Ogawa K."/>
            <person name="Ogiwara A."/>
            <person name="Oudega B."/>
            <person name="Park S.-H."/>
            <person name="Parro V."/>
            <person name="Pohl T.M."/>
            <person name="Portetelle D."/>
            <person name="Porwollik S."/>
            <person name="Prescott A.M."/>
            <person name="Presecan E."/>
            <person name="Pujic P."/>
            <person name="Purnelle B."/>
            <person name="Rapoport G."/>
            <person name="Rey M."/>
            <person name="Reynolds S."/>
            <person name="Rieger M."/>
            <person name="Rivolta C."/>
            <person name="Rocha E."/>
            <person name="Roche B."/>
            <person name="Rose M."/>
            <person name="Sadaie Y."/>
            <person name="Sato T."/>
            <person name="Scanlan E."/>
            <person name="Schleich S."/>
            <person name="Schroeter R."/>
            <person name="Scoffone F."/>
            <person name="Sekiguchi J."/>
            <person name="Sekowska A."/>
            <person name="Seror S.J."/>
            <person name="Serror P."/>
            <person name="Shin B.-S."/>
            <person name="Soldo B."/>
            <person name="Sorokin A."/>
            <person name="Tacconi E."/>
            <person name="Takagi T."/>
            <person name="Takahashi H."/>
            <person name="Takemaru K."/>
            <person name="Takeuchi M."/>
            <person name="Tamakoshi A."/>
            <person name="Tanaka T."/>
            <person name="Terpstra P."/>
            <person name="Tognoni A."/>
            <person name="Tosato V."/>
            <person name="Uchiyama S."/>
            <person name="Vandenbol M."/>
            <person name="Vannier F."/>
            <person name="Vassarotti A."/>
            <person name="Viari A."/>
            <person name="Wambutt R."/>
            <person name="Wedler E."/>
            <person name="Wedler H."/>
            <person name="Weitzenegger T."/>
            <person name="Winters P."/>
            <person name="Wipat A."/>
            <person name="Yamamoto H."/>
            <person name="Yamane K."/>
            <person name="Yasumoto K."/>
            <person name="Yata K."/>
            <person name="Yoshida K."/>
            <person name="Yoshikawa H.-F."/>
            <person name="Zumstein E."/>
            <person name="Yoshikawa H."/>
            <person name="Danchin A."/>
        </authorList>
    </citation>
    <scope>NUCLEOTIDE SEQUENCE [LARGE SCALE GENOMIC DNA]</scope>
    <source>
        <strain>168</strain>
    </source>
</reference>
<reference key="6">
    <citation type="journal article" date="1995" name="J. Bacteriol.">
        <title>A gene at 333 degrees on the Bacillus subtilis chromosome encodes the newly identified sigma B-dependent general stress protein GspA.</title>
        <authorList>
            <person name="Antelmann H."/>
            <person name="Bernhardt J."/>
            <person name="Schmid R."/>
            <person name="Hecker M."/>
        </authorList>
    </citation>
    <scope>PROTEIN SEQUENCE OF 1-15</scope>
</reference>
<reference key="7">
    <citation type="journal article" date="1994" name="Microbiology">
        <title>Isolation and characterization of a hydrogen peroxide resistant mutant of Bacillus subtilis.</title>
        <authorList>
            <person name="Hartford O.M."/>
            <person name="Dowds B.C.A."/>
        </authorList>
    </citation>
    <scope>PROTEIN SEQUENCE OF 1-19</scope>
    <source>
        <strain>168 / YB886 / BG214</strain>
    </source>
</reference>
<reference key="8">
    <citation type="journal article" date="2000" name="Microbiology">
        <title>Proteome analysis of Bacillus subtilis extracellular proteins: a two-dimensional protein electrophoretic study.</title>
        <authorList>
            <person name="Hirose I."/>
            <person name="Sano K."/>
            <person name="Shioda I."/>
            <person name="Kumano M."/>
            <person name="Nakamura K."/>
            <person name="Yamane K."/>
        </authorList>
    </citation>
    <scope>PROTEIN SEQUENCE OF 1-11</scope>
    <scope>SUBCELLULAR LOCATION</scope>
    <source>
        <strain>168</strain>
    </source>
</reference>
<reference key="9">
    <citation type="journal article" date="2007" name="Mol. Microbiol.">
        <title>CsrA of Bacillus subtilis regulates translation initiation of the gene encoding the flagellin protein (hag) by blocking ribosome binding.</title>
        <authorList>
            <person name="Yakhnin H."/>
            <person name="Pandit P."/>
            <person name="Petty T.J."/>
            <person name="Baker C.S."/>
            <person name="Romeo T."/>
            <person name="Babitzke P."/>
        </authorList>
    </citation>
    <scope>PROTEIN SEQUENCE OF 1-10</scope>
    <scope>INDUCTION</scope>
    <source>
        <strain>168</strain>
        <strain>1A96</strain>
    </source>
</reference>
<reference key="10">
    <citation type="journal article" date="2002" name="Proteomics">
        <title>Stabilization of cell wall proteins in Bacillus subtilis: a proteomic approach.</title>
        <authorList>
            <person name="Antelmann H."/>
            <person name="Yamamoto H."/>
            <person name="Sekiguchi J."/>
            <person name="Hecker M."/>
        </authorList>
    </citation>
    <scope>INDUCTION</scope>
    <scope>SUBCELLULAR LOCATION</scope>
    <scope>IDENTIFICATION BY MASS SPECTROMETRY</scope>
    <source>
        <strain>168</strain>
    </source>
</reference>
<reference key="11">
    <citation type="journal article" date="2006" name="J. Bacteriol.">
        <title>Novel conserved assembly factor of the bacterial flagellum.</title>
        <authorList>
            <person name="Titz B."/>
            <person name="Rajagopala S.V."/>
            <person name="Ester C."/>
            <person name="Haeuser R."/>
            <person name="Uetz P."/>
        </authorList>
    </citation>
    <scope>FLAGELLAR ASSEMBLY</scope>
    <scope>INTERACTION WITH FLIW</scope>
    <scope>MUTAGENESIS OF ASN-255</scope>
</reference>
<reference key="12">
    <citation type="journal article" date="2011" name="J. Bacteriol.">
        <title>Nonclassical protein secretion by Bacillus subtilis in the stationary phase is not due to cell lysis.</title>
        <authorList>
            <person name="Yang C.K."/>
            <person name="Ewis H.E."/>
            <person name="Zhang X."/>
            <person name="Lu C.D."/>
            <person name="Hu H.J."/>
            <person name="Pan Y."/>
            <person name="Abdelal A.T."/>
            <person name="Tai P.C."/>
        </authorList>
    </citation>
    <scope>SUBCELLULAR LOCATION</scope>
    <source>
        <strain>168 / WB600BHM</strain>
    </source>
</reference>
<reference key="13">
    <citation type="journal article" date="2011" name="Mol. Microbiol.">
        <title>CsrA-FliW interaction governs flagellin homeostasis and a checkpoint on flagellar morphogenesis in Bacillus subtilis.</title>
        <authorList>
            <person name="Mukherjee S."/>
            <person name="Yakhnin H."/>
            <person name="Kysela D."/>
            <person name="Sokoloski J."/>
            <person name="Babitzke P."/>
            <person name="Kearns D.B."/>
        </authorList>
    </citation>
    <scope>FUNCTION IN AUTOREGULATION</scope>
    <scope>INTERACTION WITH FLIW</scope>
    <source>
        <strain>3610</strain>
    </source>
</reference>
<reference key="14">
    <citation type="journal article" date="2013" name="J. Bacteriol.">
        <title>FliW and FliS function independently to control cytoplasmic flagellin levels in Bacillus subtilis.</title>
        <authorList>
            <person name="Mukherjee S."/>
            <person name="Babitzke P."/>
            <person name="Kearns D.B."/>
        </authorList>
    </citation>
    <scope>SUBUNIT</scope>
    <scope>INTERACTION WITH FLIS</scope>
    <scope>SUBCELLULAR LOCATION</scope>
    <source>
        <strain>3610</strain>
    </source>
</reference>
<protein>
    <recommendedName>
        <fullName>Flagellin</fullName>
    </recommendedName>
    <alternativeName>
        <fullName evidence="9">GSX1</fullName>
    </alternativeName>
    <alternativeName>
        <fullName>Hag</fullName>
    </alternativeName>
</protein>
<proteinExistence type="evidence at protein level"/>
<sequence length="304" mass="32626">MRINHNIAALNTLNRLSSNNSASQKNMEKLSSGLRINRAGDDAAGLAISEKMRGQIRGLEMASKNSQDGISLIQTAEGALTETHAILQRVRELVVQAGNTGTQDKATDLQSIQDEISALTDEIDGISNRTEFNGKKLLDGTYKVDTATPANQKNLVFQIGANATQQISVNIEDMGADALGIKEADGSIAALHSVNDLDVTKFADNAADTADIGFDAQLKVVDEAINQVSSQRAKLGAVQNRLEHTINNLSASGENLTAAESRIRDVDMAKEMSEFTKNNILSQASQAMLAQANQQPQNVLQLLR</sequence>
<accession>P02968</accession>
<feature type="chain" id="PRO_0000182585" description="Flagellin">
    <location>
        <begin position="1"/>
        <end position="304"/>
    </location>
</feature>
<feature type="mutagenesis site" description="Peptide of residues 247-265 no longer binds FliW." evidence="2">
    <original>N</original>
    <variation>A</variation>
    <location>
        <position position="255"/>
    </location>
</feature>
<feature type="sequence conflict" description="In Ref. 1; AA sequence." evidence="10" ref="1">
    <original>GT</original>
    <variation>TG</variation>
    <location>
        <begin position="101"/>
        <end position="102"/>
    </location>
</feature>
<feature type="helix" evidence="11">
    <location>
        <begin position="46"/>
        <end position="97"/>
    </location>
</feature>
<feature type="turn" evidence="11">
    <location>
        <begin position="100"/>
        <end position="102"/>
    </location>
</feature>
<feature type="turn" evidence="11">
    <location>
        <begin position="105"/>
        <end position="107"/>
    </location>
</feature>
<feature type="helix" evidence="11">
    <location>
        <begin position="108"/>
        <end position="129"/>
    </location>
</feature>
<feature type="strand" evidence="11">
    <location>
        <begin position="138"/>
        <end position="140"/>
    </location>
</feature>
<feature type="helix" evidence="11">
    <location>
        <begin position="149"/>
        <end position="151"/>
    </location>
</feature>
<feature type="strand" evidence="11">
    <location>
        <begin position="155"/>
        <end position="158"/>
    </location>
</feature>
<feature type="strand" evidence="11">
    <location>
        <begin position="160"/>
        <end position="162"/>
    </location>
</feature>
<feature type="strand" evidence="11">
    <location>
        <begin position="166"/>
        <end position="169"/>
    </location>
</feature>
<feature type="strand" evidence="11">
    <location>
        <begin position="178"/>
        <end position="182"/>
    </location>
</feature>
<feature type="strand" evidence="12">
    <location>
        <begin position="184"/>
        <end position="186"/>
    </location>
</feature>
<feature type="strand" evidence="11">
    <location>
        <begin position="188"/>
        <end position="193"/>
    </location>
</feature>
<feature type="helix" evidence="11">
    <location>
        <begin position="194"/>
        <end position="196"/>
    </location>
</feature>
<feature type="helix" evidence="11">
    <location>
        <begin position="199"/>
        <end position="204"/>
    </location>
</feature>
<feature type="turn" evidence="11">
    <location>
        <begin position="210"/>
        <end position="212"/>
    </location>
</feature>
<feature type="helix" evidence="11">
    <location>
        <begin position="214"/>
        <end position="257"/>
    </location>
</feature>
<feature type="helix" evidence="11">
    <location>
        <begin position="266"/>
        <end position="282"/>
    </location>
</feature>
<feature type="helix" evidence="11">
    <location>
        <begin position="284"/>
        <end position="291"/>
    </location>
</feature>
<feature type="helix" evidence="11">
    <location>
        <begin position="296"/>
        <end position="303"/>
    </location>
</feature>
<organism>
    <name type="scientific">Bacillus subtilis (strain 168)</name>
    <dbReference type="NCBI Taxonomy" id="224308"/>
    <lineage>
        <taxon>Bacteria</taxon>
        <taxon>Bacillati</taxon>
        <taxon>Bacillota</taxon>
        <taxon>Bacilli</taxon>
        <taxon>Bacillales</taxon>
        <taxon>Bacillaceae</taxon>
        <taxon>Bacillus</taxon>
    </lineage>
</organism>
<dbReference type="EMBL" id="M26947">
    <property type="protein sequence ID" value="AAA22437.1"/>
    <property type="molecule type" value="Genomic_DNA"/>
</dbReference>
<dbReference type="EMBL" id="M26948">
    <property type="protein sequence ID" value="AAA22509.1"/>
    <property type="molecule type" value="Genomic_DNA"/>
</dbReference>
<dbReference type="EMBL" id="U56901">
    <property type="protein sequence ID" value="AAC44951.1"/>
    <property type="molecule type" value="Genomic_DNA"/>
</dbReference>
<dbReference type="EMBL" id="AL009126">
    <property type="protein sequence ID" value="CAB15553.1"/>
    <property type="molecule type" value="Genomic_DNA"/>
</dbReference>
<dbReference type="PIR" id="A44759">
    <property type="entry name" value="FLBS68"/>
</dbReference>
<dbReference type="RefSeq" id="NP_391416.1">
    <property type="nucleotide sequence ID" value="NC_000964.3"/>
</dbReference>
<dbReference type="RefSeq" id="WP_003228021.1">
    <property type="nucleotide sequence ID" value="NZ_OZ025638.1"/>
</dbReference>
<dbReference type="PDB" id="5MAW">
    <property type="method" value="X-ray"/>
    <property type="resolution" value="1.50 A"/>
    <property type="chains" value="D=2-304"/>
</dbReference>
<dbReference type="PDB" id="5WJT">
    <property type="method" value="EM"/>
    <property type="resolution" value="3.80 A"/>
    <property type="chains" value="A/B/C/D/E/F/G/H/I/J/K/L/M/N/O/P/Q/R/S/T/U/V/W/X/Y/Z/a/b/c/d=1-304"/>
</dbReference>
<dbReference type="PDB" id="6GOW">
    <property type="method" value="X-ray"/>
    <property type="resolution" value="2.10 A"/>
    <property type="chains" value="D=1-304"/>
</dbReference>
<dbReference type="PDBsum" id="5MAW"/>
<dbReference type="PDBsum" id="5WJT"/>
<dbReference type="PDBsum" id="6GOW"/>
<dbReference type="SMR" id="P02968"/>
<dbReference type="DIP" id="DIP-59540N"/>
<dbReference type="FunCoup" id="P02968">
    <property type="interactions" value="173"/>
</dbReference>
<dbReference type="IntAct" id="P02968">
    <property type="interactions" value="2"/>
</dbReference>
<dbReference type="MINT" id="P02968"/>
<dbReference type="STRING" id="224308.BSU35360"/>
<dbReference type="jPOST" id="P02968"/>
<dbReference type="PaxDb" id="224308-BSU35360"/>
<dbReference type="EnsemblBacteria" id="CAB15553">
    <property type="protein sequence ID" value="CAB15553"/>
    <property type="gene ID" value="BSU_35360"/>
</dbReference>
<dbReference type="GeneID" id="936742"/>
<dbReference type="KEGG" id="bsu:BSU35360"/>
<dbReference type="PATRIC" id="fig|224308.179.peg.3827"/>
<dbReference type="eggNOG" id="COG1344">
    <property type="taxonomic scope" value="Bacteria"/>
</dbReference>
<dbReference type="InParanoid" id="P02968"/>
<dbReference type="OrthoDB" id="9796789at2"/>
<dbReference type="PhylomeDB" id="P02968"/>
<dbReference type="BioCyc" id="BSUB:BSU35360-MONOMER"/>
<dbReference type="Proteomes" id="UP000001570">
    <property type="component" value="Chromosome"/>
</dbReference>
<dbReference type="GO" id="GO:0009288">
    <property type="term" value="C:bacterial-type flagellum"/>
    <property type="evidence" value="ECO:0007669"/>
    <property type="project" value="UniProtKB-SubCell"/>
</dbReference>
<dbReference type="GO" id="GO:0005576">
    <property type="term" value="C:extracellular region"/>
    <property type="evidence" value="ECO:0007669"/>
    <property type="project" value="UniProtKB-SubCell"/>
</dbReference>
<dbReference type="GO" id="GO:0005198">
    <property type="term" value="F:structural molecule activity"/>
    <property type="evidence" value="ECO:0007669"/>
    <property type="project" value="InterPro"/>
</dbReference>
<dbReference type="Gene3D" id="1.20.1330.10">
    <property type="entry name" value="f41 fragment of flagellin, N-terminal domain"/>
    <property type="match status" value="1"/>
</dbReference>
<dbReference type="InterPro" id="IPR001492">
    <property type="entry name" value="Flagellin"/>
</dbReference>
<dbReference type="InterPro" id="IPR046358">
    <property type="entry name" value="Flagellin_C"/>
</dbReference>
<dbReference type="InterPro" id="IPR001029">
    <property type="entry name" value="Flagellin_N"/>
</dbReference>
<dbReference type="NCBIfam" id="NF009446">
    <property type="entry name" value="PRK12804.1"/>
    <property type="match status" value="1"/>
</dbReference>
<dbReference type="PANTHER" id="PTHR42792">
    <property type="entry name" value="FLAGELLIN"/>
    <property type="match status" value="1"/>
</dbReference>
<dbReference type="PANTHER" id="PTHR42792:SF2">
    <property type="entry name" value="FLAGELLIN"/>
    <property type="match status" value="1"/>
</dbReference>
<dbReference type="Pfam" id="PF00700">
    <property type="entry name" value="Flagellin_C"/>
    <property type="match status" value="1"/>
</dbReference>
<dbReference type="Pfam" id="PF00669">
    <property type="entry name" value="Flagellin_N"/>
    <property type="match status" value="1"/>
</dbReference>
<dbReference type="PRINTS" id="PR00207">
    <property type="entry name" value="FLAGELLIN"/>
</dbReference>
<dbReference type="SUPFAM" id="SSF64518">
    <property type="entry name" value="Phase 1 flagellin"/>
    <property type="match status" value="1"/>
</dbReference>
<comment type="function">
    <text evidence="2 5">Flagellin is the subunit which polymerizes to form the filaments of bacterial flagella. Assembly into flagella requires FliW (PubMed:16936039). Acts as a homeostatic autoinhibitory regulator to control its own cytoplasmic levels. Partner switching by flagellin between FliW and CsrA provides a flagellar assembly checkpoint to tightly control the timing of flagellin synthesis. Flagellin binds to assembly factor FliW, freeing translation regulator CsrA to repress translation of the flagellin mRNA. When the flagellar hook is assembled flagellin is secreted, depleting intracellular flagellin, which frees FliW to interact with CsrA. This derepresses flagellin translation and provides protein for flagellar assembly. Once the flagellar filament is completed cytoplasmic flagellin levels rise and CsrA translation repression of flagellin reinitiates (PubMed:21895793).</text>
</comment>
<comment type="subunit">
    <text evidence="5 6 7">Interacts with FliW in a 1:1 complex (PubMed:16936039, PubMed:21895793). Forms a 3-way complex of Hag, FliS and FliW, in which Flis and FliW do not directly interact (PubMed:23144244).</text>
</comment>
<comment type="subcellular location">
    <subcellularLocation>
        <location evidence="4 6">Secreted</location>
    </subcellularLocation>
    <subcellularLocation>
        <location>Bacterial flagellum</location>
    </subcellularLocation>
    <subcellularLocation>
        <location evidence="1">Secreted</location>
        <location evidence="1">Cell wall</location>
    </subcellularLocation>
    <text>Cell wall localization shown in PubMed:11987133.</text>
</comment>
<comment type="induction">
    <text evidence="1 3">Under positive control of SigD (PubMed:11987133). Repressed by CsrA; repression is greater in the 1A96 than 168 genetic background and higher in minimal than rich medium (PubMed:17555441).</text>
</comment>
<comment type="similarity">
    <text evidence="10">Belongs to the bacterial flagellin family.</text>
</comment>
<keyword id="KW-0002">3D-structure</keyword>
<keyword id="KW-0975">Bacterial flagellum</keyword>
<keyword id="KW-0134">Cell wall</keyword>
<keyword id="KW-0903">Direct protein sequencing</keyword>
<keyword id="KW-1185">Reference proteome</keyword>
<keyword id="KW-0964">Secreted</keyword>